<reference key="1">
    <citation type="journal article" date="2006" name="PLoS Genet.">
        <title>The complete genome sequence and comparative genome analysis of the high pathogenicity Yersinia enterocolitica strain 8081.</title>
        <authorList>
            <person name="Thomson N.R."/>
            <person name="Howard S."/>
            <person name="Wren B.W."/>
            <person name="Holden M.T.G."/>
            <person name="Crossman L."/>
            <person name="Challis G.L."/>
            <person name="Churcher C."/>
            <person name="Mungall K."/>
            <person name="Brooks K."/>
            <person name="Chillingworth T."/>
            <person name="Feltwell T."/>
            <person name="Abdellah Z."/>
            <person name="Hauser H."/>
            <person name="Jagels K."/>
            <person name="Maddison M."/>
            <person name="Moule S."/>
            <person name="Sanders M."/>
            <person name="Whitehead S."/>
            <person name="Quail M.A."/>
            <person name="Dougan G."/>
            <person name="Parkhill J."/>
            <person name="Prentice M.B."/>
        </authorList>
    </citation>
    <scope>NUCLEOTIDE SEQUENCE [LARGE SCALE GENOMIC DNA]</scope>
    <source>
        <strain>NCTC 13174 / 8081</strain>
    </source>
</reference>
<evidence type="ECO:0000255" key="1">
    <source>
        <dbReference type="HAMAP-Rule" id="MF_01874"/>
    </source>
</evidence>
<dbReference type="EMBL" id="AM286415">
    <property type="protein sequence ID" value="CAL11236.1"/>
    <property type="molecule type" value="Genomic_DNA"/>
</dbReference>
<dbReference type="RefSeq" id="WP_005172363.1">
    <property type="nucleotide sequence ID" value="NC_008800.1"/>
</dbReference>
<dbReference type="RefSeq" id="YP_001005469.1">
    <property type="nucleotide sequence ID" value="NC_008800.1"/>
</dbReference>
<dbReference type="KEGG" id="yen:YE1142"/>
<dbReference type="PATRIC" id="fig|393305.7.peg.1244"/>
<dbReference type="eggNOG" id="COG2707">
    <property type="taxonomic scope" value="Bacteria"/>
</dbReference>
<dbReference type="HOGENOM" id="CLU_125889_0_0_6"/>
<dbReference type="OrthoDB" id="80306at2"/>
<dbReference type="Proteomes" id="UP000000642">
    <property type="component" value="Chromosome"/>
</dbReference>
<dbReference type="GO" id="GO:0005886">
    <property type="term" value="C:plasma membrane"/>
    <property type="evidence" value="ECO:0007669"/>
    <property type="project" value="UniProtKB-SubCell"/>
</dbReference>
<dbReference type="HAMAP" id="MF_01874">
    <property type="entry name" value="UPF0756"/>
    <property type="match status" value="1"/>
</dbReference>
<dbReference type="InterPro" id="IPR007382">
    <property type="entry name" value="UPF0756_TM"/>
</dbReference>
<dbReference type="PANTHER" id="PTHR38452">
    <property type="entry name" value="UPF0756 MEMBRANE PROTEIN YEAL"/>
    <property type="match status" value="1"/>
</dbReference>
<dbReference type="PANTHER" id="PTHR38452:SF1">
    <property type="entry name" value="UPF0756 MEMBRANE PROTEIN YEAL"/>
    <property type="match status" value="1"/>
</dbReference>
<dbReference type="Pfam" id="PF04284">
    <property type="entry name" value="DUF441"/>
    <property type="match status" value="1"/>
</dbReference>
<gene>
    <name type="ordered locus">YE1142</name>
</gene>
<name>Y1142_YERE8</name>
<sequence>MAALDPTLLILLVLAGLGIISHNMTVTLAILTLIAVRITPLNQFFPWIEKYGLTIGILILTIGVMTPIASGKISASEVLHSFVQWKSILAIVVGVAVSWLGGRGVSLMTHQPSVVAGLLVGTVLGVALFRGVPVGPLIAAGLLSLVIGKS</sequence>
<feature type="chain" id="PRO_0000388941" description="UPF0756 membrane protein YE1142">
    <location>
        <begin position="1"/>
        <end position="150"/>
    </location>
</feature>
<feature type="transmembrane region" description="Helical" evidence="1">
    <location>
        <begin position="1"/>
        <end position="21"/>
    </location>
</feature>
<feature type="transmembrane region" description="Helical" evidence="1">
    <location>
        <begin position="51"/>
        <end position="71"/>
    </location>
</feature>
<feature type="transmembrane region" description="Helical" evidence="1">
    <location>
        <begin position="88"/>
        <end position="108"/>
    </location>
</feature>
<feature type="transmembrane region" description="Helical" evidence="1">
    <location>
        <begin position="114"/>
        <end position="134"/>
    </location>
</feature>
<proteinExistence type="inferred from homology"/>
<organism>
    <name type="scientific">Yersinia enterocolitica serotype O:8 / biotype 1B (strain NCTC 13174 / 8081)</name>
    <dbReference type="NCBI Taxonomy" id="393305"/>
    <lineage>
        <taxon>Bacteria</taxon>
        <taxon>Pseudomonadati</taxon>
        <taxon>Pseudomonadota</taxon>
        <taxon>Gammaproteobacteria</taxon>
        <taxon>Enterobacterales</taxon>
        <taxon>Yersiniaceae</taxon>
        <taxon>Yersinia</taxon>
    </lineage>
</organism>
<comment type="subcellular location">
    <subcellularLocation>
        <location evidence="1">Cell membrane</location>
        <topology evidence="1">Multi-pass membrane protein</topology>
    </subcellularLocation>
</comment>
<comment type="similarity">
    <text evidence="1">Belongs to the UPF0756 family.</text>
</comment>
<protein>
    <recommendedName>
        <fullName evidence="1">UPF0756 membrane protein YE1142</fullName>
    </recommendedName>
</protein>
<accession>A1JL11</accession>
<keyword id="KW-1003">Cell membrane</keyword>
<keyword id="KW-0472">Membrane</keyword>
<keyword id="KW-0812">Transmembrane</keyword>
<keyword id="KW-1133">Transmembrane helix</keyword>